<evidence type="ECO:0000255" key="1">
    <source>
        <dbReference type="HAMAP-Rule" id="MF_00564"/>
    </source>
</evidence>
<comment type="function">
    <text evidence="1">Phosphorolytic 3'-5' exoribonuclease that plays an important role in tRNA 3'-end maturation. Removes nucleotide residues following the 3'-CCA terminus of tRNAs; can also add nucleotides to the ends of RNA molecules by using nucleoside diphosphates as substrates, but this may not be physiologically important. Probably plays a role in initiation of 16S rRNA degradation (leading to ribosome degradation) during starvation.</text>
</comment>
<comment type="catalytic activity">
    <reaction evidence="1">
        <text>tRNA(n+1) + phosphate = tRNA(n) + a ribonucleoside 5'-diphosphate</text>
        <dbReference type="Rhea" id="RHEA:10628"/>
        <dbReference type="Rhea" id="RHEA-COMP:17343"/>
        <dbReference type="Rhea" id="RHEA-COMP:17344"/>
        <dbReference type="ChEBI" id="CHEBI:43474"/>
        <dbReference type="ChEBI" id="CHEBI:57930"/>
        <dbReference type="ChEBI" id="CHEBI:173114"/>
        <dbReference type="EC" id="2.7.7.56"/>
    </reaction>
</comment>
<comment type="subunit">
    <text evidence="1">Homohexameric ring arranged as a trimer of dimers.</text>
</comment>
<comment type="similarity">
    <text evidence="1">Belongs to the RNase PH family.</text>
</comment>
<name>RNPH_BURMA</name>
<feature type="chain" id="PRO_0000139878" description="Ribonuclease PH">
    <location>
        <begin position="1"/>
        <end position="243"/>
    </location>
</feature>
<feature type="binding site" evidence="1">
    <location>
        <position position="91"/>
    </location>
    <ligand>
        <name>phosphate</name>
        <dbReference type="ChEBI" id="CHEBI:43474"/>
        <note>substrate</note>
    </ligand>
</feature>
<feature type="binding site" evidence="1">
    <location>
        <begin position="129"/>
        <end position="131"/>
    </location>
    <ligand>
        <name>phosphate</name>
        <dbReference type="ChEBI" id="CHEBI:43474"/>
        <note>substrate</note>
    </ligand>
</feature>
<dbReference type="EC" id="2.7.7.56" evidence="1"/>
<dbReference type="EMBL" id="CP000010">
    <property type="protein sequence ID" value="AAU50023.1"/>
    <property type="molecule type" value="Genomic_DNA"/>
</dbReference>
<dbReference type="RefSeq" id="WP_004186400.1">
    <property type="nucleotide sequence ID" value="NC_006348.1"/>
</dbReference>
<dbReference type="RefSeq" id="YP_103672.1">
    <property type="nucleotide sequence ID" value="NC_006348.1"/>
</dbReference>
<dbReference type="SMR" id="Q62HZ8"/>
<dbReference type="GeneID" id="93061158"/>
<dbReference type="KEGG" id="bma:BMA2098"/>
<dbReference type="PATRIC" id="fig|243160.12.peg.2166"/>
<dbReference type="eggNOG" id="COG0689">
    <property type="taxonomic scope" value="Bacteria"/>
</dbReference>
<dbReference type="HOGENOM" id="CLU_050858_0_0_4"/>
<dbReference type="Proteomes" id="UP000006693">
    <property type="component" value="Chromosome 1"/>
</dbReference>
<dbReference type="GO" id="GO:0000175">
    <property type="term" value="F:3'-5'-RNA exonuclease activity"/>
    <property type="evidence" value="ECO:0007669"/>
    <property type="project" value="UniProtKB-UniRule"/>
</dbReference>
<dbReference type="GO" id="GO:0000049">
    <property type="term" value="F:tRNA binding"/>
    <property type="evidence" value="ECO:0007669"/>
    <property type="project" value="UniProtKB-UniRule"/>
</dbReference>
<dbReference type="GO" id="GO:0009022">
    <property type="term" value="F:tRNA nucleotidyltransferase activity"/>
    <property type="evidence" value="ECO:0007669"/>
    <property type="project" value="UniProtKB-UniRule"/>
</dbReference>
<dbReference type="GO" id="GO:0016075">
    <property type="term" value="P:rRNA catabolic process"/>
    <property type="evidence" value="ECO:0007669"/>
    <property type="project" value="UniProtKB-UniRule"/>
</dbReference>
<dbReference type="GO" id="GO:0006364">
    <property type="term" value="P:rRNA processing"/>
    <property type="evidence" value="ECO:0007669"/>
    <property type="project" value="UniProtKB-KW"/>
</dbReference>
<dbReference type="GO" id="GO:0008033">
    <property type="term" value="P:tRNA processing"/>
    <property type="evidence" value="ECO:0007669"/>
    <property type="project" value="UniProtKB-UniRule"/>
</dbReference>
<dbReference type="CDD" id="cd11362">
    <property type="entry name" value="RNase_PH_bact"/>
    <property type="match status" value="1"/>
</dbReference>
<dbReference type="FunFam" id="3.30.230.70:FF:000003">
    <property type="entry name" value="Ribonuclease PH"/>
    <property type="match status" value="1"/>
</dbReference>
<dbReference type="Gene3D" id="3.30.230.70">
    <property type="entry name" value="GHMP Kinase, N-terminal domain"/>
    <property type="match status" value="1"/>
</dbReference>
<dbReference type="HAMAP" id="MF_00564">
    <property type="entry name" value="RNase_PH"/>
    <property type="match status" value="1"/>
</dbReference>
<dbReference type="InterPro" id="IPR001247">
    <property type="entry name" value="ExoRNase_PH_dom1"/>
</dbReference>
<dbReference type="InterPro" id="IPR015847">
    <property type="entry name" value="ExoRNase_PH_dom2"/>
</dbReference>
<dbReference type="InterPro" id="IPR036345">
    <property type="entry name" value="ExoRNase_PH_dom2_sf"/>
</dbReference>
<dbReference type="InterPro" id="IPR027408">
    <property type="entry name" value="PNPase/RNase_PH_dom_sf"/>
</dbReference>
<dbReference type="InterPro" id="IPR020568">
    <property type="entry name" value="Ribosomal_Su5_D2-typ_SF"/>
</dbReference>
<dbReference type="InterPro" id="IPR050080">
    <property type="entry name" value="RNase_PH"/>
</dbReference>
<dbReference type="InterPro" id="IPR002381">
    <property type="entry name" value="RNase_PH_bac-type"/>
</dbReference>
<dbReference type="InterPro" id="IPR018336">
    <property type="entry name" value="RNase_PH_CS"/>
</dbReference>
<dbReference type="NCBIfam" id="TIGR01966">
    <property type="entry name" value="RNasePH"/>
    <property type="match status" value="1"/>
</dbReference>
<dbReference type="PANTHER" id="PTHR11953">
    <property type="entry name" value="EXOSOME COMPLEX COMPONENT"/>
    <property type="match status" value="1"/>
</dbReference>
<dbReference type="PANTHER" id="PTHR11953:SF0">
    <property type="entry name" value="EXOSOME COMPLEX COMPONENT RRP41"/>
    <property type="match status" value="1"/>
</dbReference>
<dbReference type="Pfam" id="PF01138">
    <property type="entry name" value="RNase_PH"/>
    <property type="match status" value="1"/>
</dbReference>
<dbReference type="Pfam" id="PF03725">
    <property type="entry name" value="RNase_PH_C"/>
    <property type="match status" value="1"/>
</dbReference>
<dbReference type="SUPFAM" id="SSF55666">
    <property type="entry name" value="Ribonuclease PH domain 2-like"/>
    <property type="match status" value="1"/>
</dbReference>
<dbReference type="SUPFAM" id="SSF54211">
    <property type="entry name" value="Ribosomal protein S5 domain 2-like"/>
    <property type="match status" value="1"/>
</dbReference>
<dbReference type="PROSITE" id="PS01277">
    <property type="entry name" value="RIBONUCLEASE_PH"/>
    <property type="match status" value="1"/>
</dbReference>
<proteinExistence type="inferred from homology"/>
<protein>
    <recommendedName>
        <fullName evidence="1">Ribonuclease PH</fullName>
        <shortName evidence="1">RNase PH</shortName>
        <ecNumber evidence="1">2.7.7.56</ecNumber>
    </recommendedName>
    <alternativeName>
        <fullName evidence="1">tRNA nucleotidyltransferase</fullName>
    </alternativeName>
</protein>
<gene>
    <name evidence="1" type="primary">rph</name>
    <name type="ordered locus">BMA2098</name>
</gene>
<sequence>MTNSSLRPSGRRADQLRDVRITRHYTKHAEGAVLVEFGDTKVICTASVAERVPEFLRERGQGWLTAEYGMLPRATHTRSDREAARGKQTGRTQEIQRLIGRALRAVFDLNALGPRTLHLDCDVIQADGGTRTASITGAFVAAHDAVTKLVAAGRIARSPITDYVAAISVGVFGGTPVLDLDYDEDSACDTDMNVVMTGAGGFVEVQGTAEGAPFSRTEMNALLDLAQAGIGELVRLQRAALEA</sequence>
<keyword id="KW-0548">Nucleotidyltransferase</keyword>
<keyword id="KW-1185">Reference proteome</keyword>
<keyword id="KW-0694">RNA-binding</keyword>
<keyword id="KW-0698">rRNA processing</keyword>
<keyword id="KW-0808">Transferase</keyword>
<keyword id="KW-0819">tRNA processing</keyword>
<keyword id="KW-0820">tRNA-binding</keyword>
<reference key="1">
    <citation type="journal article" date="2004" name="Proc. Natl. Acad. Sci. U.S.A.">
        <title>Structural flexibility in the Burkholderia mallei genome.</title>
        <authorList>
            <person name="Nierman W.C."/>
            <person name="DeShazer D."/>
            <person name="Kim H.S."/>
            <person name="Tettelin H."/>
            <person name="Nelson K.E."/>
            <person name="Feldblyum T.V."/>
            <person name="Ulrich R.L."/>
            <person name="Ronning C.M."/>
            <person name="Brinkac L.M."/>
            <person name="Daugherty S.C."/>
            <person name="Davidsen T.D."/>
            <person name="DeBoy R.T."/>
            <person name="Dimitrov G."/>
            <person name="Dodson R.J."/>
            <person name="Durkin A.S."/>
            <person name="Gwinn M.L."/>
            <person name="Haft D.H."/>
            <person name="Khouri H.M."/>
            <person name="Kolonay J.F."/>
            <person name="Madupu R."/>
            <person name="Mohammoud Y."/>
            <person name="Nelson W.C."/>
            <person name="Radune D."/>
            <person name="Romero C.M."/>
            <person name="Sarria S."/>
            <person name="Selengut J."/>
            <person name="Shamblin C."/>
            <person name="Sullivan S.A."/>
            <person name="White O."/>
            <person name="Yu Y."/>
            <person name="Zafar N."/>
            <person name="Zhou L."/>
            <person name="Fraser C.M."/>
        </authorList>
    </citation>
    <scope>NUCLEOTIDE SEQUENCE [LARGE SCALE GENOMIC DNA]</scope>
    <source>
        <strain>ATCC 23344</strain>
    </source>
</reference>
<organism>
    <name type="scientific">Burkholderia mallei (strain ATCC 23344)</name>
    <dbReference type="NCBI Taxonomy" id="243160"/>
    <lineage>
        <taxon>Bacteria</taxon>
        <taxon>Pseudomonadati</taxon>
        <taxon>Pseudomonadota</taxon>
        <taxon>Betaproteobacteria</taxon>
        <taxon>Burkholderiales</taxon>
        <taxon>Burkholderiaceae</taxon>
        <taxon>Burkholderia</taxon>
        <taxon>pseudomallei group</taxon>
    </lineage>
</organism>
<accession>Q62HZ8</accession>